<dbReference type="EC" id="3.1.3.77" evidence="1"/>
<dbReference type="EMBL" id="CP001252">
    <property type="protein sequence ID" value="ACK44631.1"/>
    <property type="molecule type" value="Genomic_DNA"/>
</dbReference>
<dbReference type="RefSeq" id="WP_012586388.1">
    <property type="nucleotide sequence ID" value="NC_011663.1"/>
</dbReference>
<dbReference type="SMR" id="B8E3J4"/>
<dbReference type="KEGG" id="sbp:Sbal223_0088"/>
<dbReference type="HOGENOM" id="CLU_023273_0_0_6"/>
<dbReference type="UniPathway" id="UPA00904">
    <property type="reaction ID" value="UER00876"/>
</dbReference>
<dbReference type="UniPathway" id="UPA00904">
    <property type="reaction ID" value="UER00877"/>
</dbReference>
<dbReference type="Proteomes" id="UP000002507">
    <property type="component" value="Chromosome"/>
</dbReference>
<dbReference type="GO" id="GO:0043715">
    <property type="term" value="F:2,3-diketo-5-methylthiopentyl-1-phosphate enolase activity"/>
    <property type="evidence" value="ECO:0007669"/>
    <property type="project" value="UniProtKB-UniRule"/>
</dbReference>
<dbReference type="GO" id="GO:0043716">
    <property type="term" value="F:2-hydroxy-3-keto-5-methylthiopentenyl-1-phosphate phosphatase activity"/>
    <property type="evidence" value="ECO:0007669"/>
    <property type="project" value="UniProtKB-UniRule"/>
</dbReference>
<dbReference type="GO" id="GO:0043874">
    <property type="term" value="F:acireductone synthase activity"/>
    <property type="evidence" value="ECO:0007669"/>
    <property type="project" value="UniProtKB-EC"/>
</dbReference>
<dbReference type="GO" id="GO:0000287">
    <property type="term" value="F:magnesium ion binding"/>
    <property type="evidence" value="ECO:0007669"/>
    <property type="project" value="UniProtKB-UniRule"/>
</dbReference>
<dbReference type="GO" id="GO:0019509">
    <property type="term" value="P:L-methionine salvage from methylthioadenosine"/>
    <property type="evidence" value="ECO:0007669"/>
    <property type="project" value="UniProtKB-UniRule"/>
</dbReference>
<dbReference type="CDD" id="cd01629">
    <property type="entry name" value="HAD_EP"/>
    <property type="match status" value="1"/>
</dbReference>
<dbReference type="FunFam" id="1.10.720.60:FF:000008">
    <property type="entry name" value="Enolase-phosphatase E1"/>
    <property type="match status" value="1"/>
</dbReference>
<dbReference type="Gene3D" id="1.10.720.60">
    <property type="match status" value="1"/>
</dbReference>
<dbReference type="Gene3D" id="3.40.50.1000">
    <property type="entry name" value="HAD superfamily/HAD-like"/>
    <property type="match status" value="1"/>
</dbReference>
<dbReference type="HAMAP" id="MF_01681">
    <property type="entry name" value="Salvage_MtnC"/>
    <property type="match status" value="1"/>
</dbReference>
<dbReference type="InterPro" id="IPR023943">
    <property type="entry name" value="Enolase-ppase_E1"/>
</dbReference>
<dbReference type="InterPro" id="IPR036412">
    <property type="entry name" value="HAD-like_sf"/>
</dbReference>
<dbReference type="InterPro" id="IPR006439">
    <property type="entry name" value="HAD-SF_hydro_IA"/>
</dbReference>
<dbReference type="InterPro" id="IPR023214">
    <property type="entry name" value="HAD_sf"/>
</dbReference>
<dbReference type="NCBIfam" id="TIGR01691">
    <property type="entry name" value="enolase-ppase"/>
    <property type="match status" value="1"/>
</dbReference>
<dbReference type="NCBIfam" id="TIGR01549">
    <property type="entry name" value="HAD-SF-IA-v1"/>
    <property type="match status" value="1"/>
</dbReference>
<dbReference type="PANTHER" id="PTHR20371">
    <property type="entry name" value="ENOLASE-PHOSPHATASE E1"/>
    <property type="match status" value="1"/>
</dbReference>
<dbReference type="PANTHER" id="PTHR20371:SF1">
    <property type="entry name" value="ENOLASE-PHOSPHATASE E1"/>
    <property type="match status" value="1"/>
</dbReference>
<dbReference type="Pfam" id="PF00702">
    <property type="entry name" value="Hydrolase"/>
    <property type="match status" value="1"/>
</dbReference>
<dbReference type="PRINTS" id="PR00413">
    <property type="entry name" value="HADHALOGNASE"/>
</dbReference>
<dbReference type="SFLD" id="SFLDF00044">
    <property type="entry name" value="enolase-phosphatase"/>
    <property type="match status" value="1"/>
</dbReference>
<dbReference type="SFLD" id="SFLDS00003">
    <property type="entry name" value="Haloacid_Dehalogenase"/>
    <property type="match status" value="1"/>
</dbReference>
<dbReference type="SUPFAM" id="SSF56784">
    <property type="entry name" value="HAD-like"/>
    <property type="match status" value="1"/>
</dbReference>
<reference key="1">
    <citation type="submission" date="2008-12" db="EMBL/GenBank/DDBJ databases">
        <title>Complete sequence of chromosome of Shewanella baltica OS223.</title>
        <authorList>
            <consortium name="US DOE Joint Genome Institute"/>
            <person name="Lucas S."/>
            <person name="Copeland A."/>
            <person name="Lapidus A."/>
            <person name="Glavina del Rio T."/>
            <person name="Dalin E."/>
            <person name="Tice H."/>
            <person name="Bruce D."/>
            <person name="Goodwin L."/>
            <person name="Pitluck S."/>
            <person name="Chertkov O."/>
            <person name="Meincke L."/>
            <person name="Brettin T."/>
            <person name="Detter J.C."/>
            <person name="Han C."/>
            <person name="Kuske C.R."/>
            <person name="Larimer F."/>
            <person name="Land M."/>
            <person name="Hauser L."/>
            <person name="Kyrpides N."/>
            <person name="Ovchinnikova G."/>
            <person name="Brettar I."/>
            <person name="Rodrigues J."/>
            <person name="Konstantinidis K."/>
            <person name="Tiedje J."/>
        </authorList>
    </citation>
    <scope>NUCLEOTIDE SEQUENCE [LARGE SCALE GENOMIC DNA]</scope>
    <source>
        <strain>OS223</strain>
    </source>
</reference>
<feature type="chain" id="PRO_1000187393" description="Enolase-phosphatase E1">
    <location>
        <begin position="1"/>
        <end position="226"/>
    </location>
</feature>
<keyword id="KW-0028">Amino-acid biosynthesis</keyword>
<keyword id="KW-0378">Hydrolase</keyword>
<keyword id="KW-0460">Magnesium</keyword>
<keyword id="KW-0479">Metal-binding</keyword>
<keyword id="KW-0486">Methionine biosynthesis</keyword>
<evidence type="ECO:0000255" key="1">
    <source>
        <dbReference type="HAMAP-Rule" id="MF_01681"/>
    </source>
</evidence>
<protein>
    <recommendedName>
        <fullName evidence="1">Enolase-phosphatase E1</fullName>
        <ecNumber evidence="1">3.1.3.77</ecNumber>
    </recommendedName>
    <alternativeName>
        <fullName evidence="1">2,3-diketo-5-methylthio-1-phosphopentane phosphatase</fullName>
    </alternativeName>
</protein>
<sequence length="226" mass="25361">MGIRAIVVDTAGTTTDLNFIQDVLFPYSVKALPDFLEQNQHNVLVENCICDTKDIALEPDADLARVTEILQQWVSEDRKATPLKTLQGLIWKQGYAHGEFKGHIFPDFIEAVKRFSAQNLRIYSFSSGSVDAQKLLFSHSDGGDLTEMFNGHFDTRTGNKLDKQAYCNILNTISLSPKQVLFVSDVIEELKAAEAAGMMTCQMVRDSTQRTGEFRKISSFDELLIE</sequence>
<organism>
    <name type="scientific">Shewanella baltica (strain OS223)</name>
    <dbReference type="NCBI Taxonomy" id="407976"/>
    <lineage>
        <taxon>Bacteria</taxon>
        <taxon>Pseudomonadati</taxon>
        <taxon>Pseudomonadota</taxon>
        <taxon>Gammaproteobacteria</taxon>
        <taxon>Alteromonadales</taxon>
        <taxon>Shewanellaceae</taxon>
        <taxon>Shewanella</taxon>
    </lineage>
</organism>
<name>MTNC_SHEB2</name>
<comment type="function">
    <text evidence="1">Bifunctional enzyme that catalyzes the enolization of 2,3-diketo-5-methylthiopentyl-1-phosphate (DK-MTP-1-P) into the intermediate 2-hydroxy-3-keto-5-methylthiopentenyl-1-phosphate (HK-MTPenyl-1-P), which is then dephosphorylated to form the acireductone 1,2-dihydroxy-3-keto-5-methylthiopentene (DHK-MTPene).</text>
</comment>
<comment type="catalytic activity">
    <reaction evidence="1">
        <text>5-methylsulfanyl-2,3-dioxopentyl phosphate + H2O = 1,2-dihydroxy-5-(methylsulfanyl)pent-1-en-3-one + phosphate</text>
        <dbReference type="Rhea" id="RHEA:21700"/>
        <dbReference type="ChEBI" id="CHEBI:15377"/>
        <dbReference type="ChEBI" id="CHEBI:43474"/>
        <dbReference type="ChEBI" id="CHEBI:49252"/>
        <dbReference type="ChEBI" id="CHEBI:58828"/>
        <dbReference type="EC" id="3.1.3.77"/>
    </reaction>
</comment>
<comment type="cofactor">
    <cofactor evidence="1">
        <name>Mg(2+)</name>
        <dbReference type="ChEBI" id="CHEBI:18420"/>
    </cofactor>
    <text evidence="1">Binds 1 Mg(2+) ion per subunit.</text>
</comment>
<comment type="pathway">
    <text evidence="1">Amino-acid biosynthesis; L-methionine biosynthesis via salvage pathway; L-methionine from S-methyl-5-thio-alpha-D-ribose 1-phosphate: step 3/6.</text>
</comment>
<comment type="pathway">
    <text evidence="1">Amino-acid biosynthesis; L-methionine biosynthesis via salvage pathway; L-methionine from S-methyl-5-thio-alpha-D-ribose 1-phosphate: step 4/6.</text>
</comment>
<comment type="subunit">
    <text evidence="1">Monomer.</text>
</comment>
<comment type="similarity">
    <text evidence="1">Belongs to the HAD-like hydrolase superfamily. MasA/MtnC family.</text>
</comment>
<gene>
    <name evidence="1" type="primary">mtnC</name>
    <name type="ordered locus">Sbal223_0088</name>
</gene>
<proteinExistence type="inferred from homology"/>
<accession>B8E3J4</accession>